<dbReference type="EC" id="3.5.2.3" evidence="1"/>
<dbReference type="EMBL" id="AL583918">
    <property type="protein sequence ID" value="CAC30041.1"/>
    <property type="molecule type" value="Genomic_DNA"/>
</dbReference>
<dbReference type="PIR" id="E86975">
    <property type="entry name" value="E86975"/>
</dbReference>
<dbReference type="RefSeq" id="NP_301453.1">
    <property type="nucleotide sequence ID" value="NC_002677.1"/>
</dbReference>
<dbReference type="RefSeq" id="WP_010907777.1">
    <property type="nucleotide sequence ID" value="NC_002677.1"/>
</dbReference>
<dbReference type="SMR" id="Q9CCR4"/>
<dbReference type="STRING" id="272631.gene:17574354"/>
<dbReference type="KEGG" id="mle:ML0533"/>
<dbReference type="PATRIC" id="fig|272631.5.peg.933"/>
<dbReference type="Leproma" id="ML0533"/>
<dbReference type="eggNOG" id="COG0044">
    <property type="taxonomic scope" value="Bacteria"/>
</dbReference>
<dbReference type="HOGENOM" id="CLU_015572_1_0_11"/>
<dbReference type="OrthoDB" id="9803027at2"/>
<dbReference type="UniPathway" id="UPA00070">
    <property type="reaction ID" value="UER00117"/>
</dbReference>
<dbReference type="Proteomes" id="UP000000806">
    <property type="component" value="Chromosome"/>
</dbReference>
<dbReference type="GO" id="GO:0005737">
    <property type="term" value="C:cytoplasm"/>
    <property type="evidence" value="ECO:0007669"/>
    <property type="project" value="TreeGrafter"/>
</dbReference>
<dbReference type="GO" id="GO:0004038">
    <property type="term" value="F:allantoinase activity"/>
    <property type="evidence" value="ECO:0007669"/>
    <property type="project" value="TreeGrafter"/>
</dbReference>
<dbReference type="GO" id="GO:0004151">
    <property type="term" value="F:dihydroorotase activity"/>
    <property type="evidence" value="ECO:0007669"/>
    <property type="project" value="UniProtKB-UniRule"/>
</dbReference>
<dbReference type="GO" id="GO:0008270">
    <property type="term" value="F:zinc ion binding"/>
    <property type="evidence" value="ECO:0007669"/>
    <property type="project" value="UniProtKB-UniRule"/>
</dbReference>
<dbReference type="GO" id="GO:0044205">
    <property type="term" value="P:'de novo' UMP biosynthetic process"/>
    <property type="evidence" value="ECO:0007669"/>
    <property type="project" value="UniProtKB-UniRule"/>
</dbReference>
<dbReference type="GO" id="GO:0006145">
    <property type="term" value="P:purine nucleobase catabolic process"/>
    <property type="evidence" value="ECO:0007669"/>
    <property type="project" value="TreeGrafter"/>
</dbReference>
<dbReference type="CDD" id="cd01317">
    <property type="entry name" value="DHOase_IIa"/>
    <property type="match status" value="1"/>
</dbReference>
<dbReference type="Gene3D" id="3.20.20.140">
    <property type="entry name" value="Metal-dependent hydrolases"/>
    <property type="match status" value="1"/>
</dbReference>
<dbReference type="Gene3D" id="2.30.40.10">
    <property type="entry name" value="Urease, subunit C, domain 1"/>
    <property type="match status" value="1"/>
</dbReference>
<dbReference type="HAMAP" id="MF_00220_B">
    <property type="entry name" value="PyrC_classI_B"/>
    <property type="match status" value="1"/>
</dbReference>
<dbReference type="InterPro" id="IPR006680">
    <property type="entry name" value="Amidohydro-rel"/>
</dbReference>
<dbReference type="InterPro" id="IPR004722">
    <property type="entry name" value="DHOase"/>
</dbReference>
<dbReference type="InterPro" id="IPR050138">
    <property type="entry name" value="DHOase/Allantoinase_Hydrolase"/>
</dbReference>
<dbReference type="InterPro" id="IPR011059">
    <property type="entry name" value="Metal-dep_hydrolase_composite"/>
</dbReference>
<dbReference type="InterPro" id="IPR032466">
    <property type="entry name" value="Metal_Hydrolase"/>
</dbReference>
<dbReference type="NCBIfam" id="NF006836">
    <property type="entry name" value="PRK09357.1-1"/>
    <property type="match status" value="1"/>
</dbReference>
<dbReference type="NCBIfam" id="TIGR00857">
    <property type="entry name" value="pyrC_multi"/>
    <property type="match status" value="1"/>
</dbReference>
<dbReference type="PANTHER" id="PTHR43668">
    <property type="entry name" value="ALLANTOINASE"/>
    <property type="match status" value="1"/>
</dbReference>
<dbReference type="PANTHER" id="PTHR43668:SF2">
    <property type="entry name" value="ALLANTOINASE"/>
    <property type="match status" value="1"/>
</dbReference>
<dbReference type="Pfam" id="PF01979">
    <property type="entry name" value="Amidohydro_1"/>
    <property type="match status" value="1"/>
</dbReference>
<dbReference type="SUPFAM" id="SSF51338">
    <property type="entry name" value="Composite domain of metallo-dependent hydrolases"/>
    <property type="match status" value="1"/>
</dbReference>
<dbReference type="SUPFAM" id="SSF51556">
    <property type="entry name" value="Metallo-dependent hydrolases"/>
    <property type="match status" value="1"/>
</dbReference>
<evidence type="ECO:0000255" key="1">
    <source>
        <dbReference type="HAMAP-Rule" id="MF_00220"/>
    </source>
</evidence>
<proteinExistence type="inferred from homology"/>
<keyword id="KW-0378">Hydrolase</keyword>
<keyword id="KW-0479">Metal-binding</keyword>
<keyword id="KW-0665">Pyrimidine biosynthesis</keyword>
<keyword id="KW-1185">Reference proteome</keyword>
<keyword id="KW-0862">Zinc</keyword>
<gene>
    <name evidence="1" type="primary">pyrC</name>
    <name type="ordered locus">ML0533</name>
</gene>
<comment type="function">
    <text evidence="1">Catalyzes the reversible cyclization of carbamoyl aspartate to dihydroorotate.</text>
</comment>
<comment type="catalytic activity">
    <reaction evidence="1">
        <text>(S)-dihydroorotate + H2O = N-carbamoyl-L-aspartate + H(+)</text>
        <dbReference type="Rhea" id="RHEA:24296"/>
        <dbReference type="ChEBI" id="CHEBI:15377"/>
        <dbReference type="ChEBI" id="CHEBI:15378"/>
        <dbReference type="ChEBI" id="CHEBI:30864"/>
        <dbReference type="ChEBI" id="CHEBI:32814"/>
        <dbReference type="EC" id="3.5.2.3"/>
    </reaction>
</comment>
<comment type="cofactor">
    <cofactor evidence="1">
        <name>Zn(2+)</name>
        <dbReference type="ChEBI" id="CHEBI:29105"/>
    </cofactor>
    <text evidence="1">Binds 2 Zn(2+) ions per subunit.</text>
</comment>
<comment type="pathway">
    <text evidence="1">Pyrimidine metabolism; UMP biosynthesis via de novo pathway; (S)-dihydroorotate from bicarbonate: step 3/3.</text>
</comment>
<comment type="similarity">
    <text evidence="1">Belongs to the metallo-dependent hydrolases superfamily. DHOase family. Class I DHOase subfamily.</text>
</comment>
<sequence>MSVLLRGVRLYGEGEQVDVLVEGEQIANIGAGIDIPDTADVIDAIDQVLLPGLVDLHTHLREPGREYAEDIETGSAAAALGGYTAVFAMPNTTPVADSPVVTDHVWRRGQQVGLVDVHPVGAVTVGLAGAELTEMGMMAAGAAQVRIFSDDGNCVHNPLVMRRALEYATGLGVLIAQHAEEPRLTVGAVAHEGPTAARLGLSGWPRAAEESIVARDALLARDAGARVHICHASTAGTVEILKWAKEQGISITAEVTPHHLLLDDSRLASYDGVNRVNPPLRETADAVALRQALADGIIDCVTTDHAPHADHEKCVEFSAARPGMLGLQTALSVVVHTMVVPGLLSWRDVAQVMSENPARIAGLPDHGRPLEVGEPANLTVVDPDVTWTVTGDGLASRSANTPYEAMTLPATVTATLLRGKVTARGQKSPV</sequence>
<accession>Q9CCR4</accession>
<name>PYRC_MYCLE</name>
<feature type="chain" id="PRO_0000147243" description="Dihydroorotase">
    <location>
        <begin position="1"/>
        <end position="430"/>
    </location>
</feature>
<feature type="active site" evidence="1">
    <location>
        <position position="304"/>
    </location>
</feature>
<feature type="binding site" evidence="1">
    <location>
        <position position="57"/>
    </location>
    <ligand>
        <name>Zn(2+)</name>
        <dbReference type="ChEBI" id="CHEBI:29105"/>
        <label>1</label>
    </ligand>
</feature>
<feature type="binding site" evidence="1">
    <location>
        <begin position="59"/>
        <end position="61"/>
    </location>
    <ligand>
        <name>substrate</name>
    </ligand>
</feature>
<feature type="binding site" evidence="1">
    <location>
        <position position="59"/>
    </location>
    <ligand>
        <name>Zn(2+)</name>
        <dbReference type="ChEBI" id="CHEBI:29105"/>
        <label>1</label>
    </ligand>
</feature>
<feature type="binding site" evidence="1">
    <location>
        <position position="91"/>
    </location>
    <ligand>
        <name>substrate</name>
    </ligand>
</feature>
<feature type="binding site" evidence="1">
    <location>
        <position position="151"/>
    </location>
    <ligand>
        <name>Zn(2+)</name>
        <dbReference type="ChEBI" id="CHEBI:29105"/>
        <label>1</label>
    </ligand>
</feature>
<feature type="binding site" evidence="1">
    <location>
        <position position="151"/>
    </location>
    <ligand>
        <name>Zn(2+)</name>
        <dbReference type="ChEBI" id="CHEBI:29105"/>
        <label>2</label>
    </ligand>
</feature>
<feature type="binding site" evidence="1">
    <location>
        <position position="178"/>
    </location>
    <ligand>
        <name>Zn(2+)</name>
        <dbReference type="ChEBI" id="CHEBI:29105"/>
        <label>2</label>
    </ligand>
</feature>
<feature type="binding site" evidence="1">
    <location>
        <position position="231"/>
    </location>
    <ligand>
        <name>Zn(2+)</name>
        <dbReference type="ChEBI" id="CHEBI:29105"/>
        <label>2</label>
    </ligand>
</feature>
<feature type="binding site" evidence="1">
    <location>
        <position position="277"/>
    </location>
    <ligand>
        <name>substrate</name>
    </ligand>
</feature>
<feature type="binding site" evidence="1">
    <location>
        <position position="304"/>
    </location>
    <ligand>
        <name>Zn(2+)</name>
        <dbReference type="ChEBI" id="CHEBI:29105"/>
        <label>1</label>
    </ligand>
</feature>
<feature type="binding site" evidence="1">
    <location>
        <position position="308"/>
    </location>
    <ligand>
        <name>substrate</name>
    </ligand>
</feature>
<feature type="binding site" evidence="1">
    <location>
        <begin position="322"/>
        <end position="323"/>
    </location>
    <ligand>
        <name>substrate</name>
    </ligand>
</feature>
<reference key="1">
    <citation type="journal article" date="2001" name="Nature">
        <title>Massive gene decay in the leprosy bacillus.</title>
        <authorList>
            <person name="Cole S.T."/>
            <person name="Eiglmeier K."/>
            <person name="Parkhill J."/>
            <person name="James K.D."/>
            <person name="Thomson N.R."/>
            <person name="Wheeler P.R."/>
            <person name="Honore N."/>
            <person name="Garnier T."/>
            <person name="Churcher C.M."/>
            <person name="Harris D.E."/>
            <person name="Mungall K.L."/>
            <person name="Basham D."/>
            <person name="Brown D."/>
            <person name="Chillingworth T."/>
            <person name="Connor R."/>
            <person name="Davies R.M."/>
            <person name="Devlin K."/>
            <person name="Duthoy S."/>
            <person name="Feltwell T."/>
            <person name="Fraser A."/>
            <person name="Hamlin N."/>
            <person name="Holroyd S."/>
            <person name="Hornsby T."/>
            <person name="Jagels K."/>
            <person name="Lacroix C."/>
            <person name="Maclean J."/>
            <person name="Moule S."/>
            <person name="Murphy L.D."/>
            <person name="Oliver K."/>
            <person name="Quail M.A."/>
            <person name="Rajandream M.A."/>
            <person name="Rutherford K.M."/>
            <person name="Rutter S."/>
            <person name="Seeger K."/>
            <person name="Simon S."/>
            <person name="Simmonds M."/>
            <person name="Skelton J."/>
            <person name="Squares R."/>
            <person name="Squares S."/>
            <person name="Stevens K."/>
            <person name="Taylor K."/>
            <person name="Whitehead S."/>
            <person name="Woodward J.R."/>
            <person name="Barrell B.G."/>
        </authorList>
    </citation>
    <scope>NUCLEOTIDE SEQUENCE [LARGE SCALE GENOMIC DNA]</scope>
    <source>
        <strain>TN</strain>
    </source>
</reference>
<protein>
    <recommendedName>
        <fullName evidence="1">Dihydroorotase</fullName>
        <shortName evidence="1">DHOase</shortName>
        <ecNumber evidence="1">3.5.2.3</ecNumber>
    </recommendedName>
</protein>
<organism>
    <name type="scientific">Mycobacterium leprae (strain TN)</name>
    <dbReference type="NCBI Taxonomy" id="272631"/>
    <lineage>
        <taxon>Bacteria</taxon>
        <taxon>Bacillati</taxon>
        <taxon>Actinomycetota</taxon>
        <taxon>Actinomycetes</taxon>
        <taxon>Mycobacteriales</taxon>
        <taxon>Mycobacteriaceae</taxon>
        <taxon>Mycobacterium</taxon>
    </lineage>
</organism>